<comment type="function">
    <text evidence="1">This is one of the proteins that binds to the 5S RNA in the ribosome where it forms part of the central protuberance.</text>
</comment>
<comment type="subunit">
    <text evidence="1">Part of the 50S ribosomal subunit; part of the 5S rRNA/L5/L18/L25 subcomplex. Contacts the 5S rRNA. Binds to the 5S rRNA independently of L5 and L18.</text>
</comment>
<comment type="similarity">
    <text evidence="1">Belongs to the bacterial ribosomal protein bL25 family. CTC subfamily.</text>
</comment>
<sequence length="214" mass="23678">MSNEFLLNAESRSDTGKGASRRLRRLQERVPGILYGGEAEPQMISVELRELKKALENEAFYSHILTLKLDGADVQAVLRDMQRHPAKGHPLHVDLLRVDKTHKITMSVPLHFTNEESSIGVKKQGGEIQHNFAEVEVSCLPQHLPEFIEVDMANAELDSVVHLSDLKLPKGVELTQLALGEDHDQPVAAVHQPKVRASSDDDDAAEGEEAASEE</sequence>
<evidence type="ECO:0000255" key="1">
    <source>
        <dbReference type="HAMAP-Rule" id="MF_01334"/>
    </source>
</evidence>
<evidence type="ECO:0000256" key="2">
    <source>
        <dbReference type="SAM" id="MobiDB-lite"/>
    </source>
</evidence>
<evidence type="ECO:0000305" key="3"/>
<reference key="1">
    <citation type="journal article" date="2006" name="Nat. Biotechnol.">
        <title>Genome sequence of the ubiquitous hydrocarbon-degrading marine bacterium Alcanivorax borkumensis.</title>
        <authorList>
            <person name="Schneiker S."/>
            <person name="Martins dos Santos V.A.P."/>
            <person name="Bartels D."/>
            <person name="Bekel T."/>
            <person name="Brecht M."/>
            <person name="Buhrmester J."/>
            <person name="Chernikova T.N."/>
            <person name="Denaro R."/>
            <person name="Ferrer M."/>
            <person name="Gertler C."/>
            <person name="Goesmann A."/>
            <person name="Golyshina O.V."/>
            <person name="Kaminski F."/>
            <person name="Khachane A.N."/>
            <person name="Lang S."/>
            <person name="Linke B."/>
            <person name="McHardy A.C."/>
            <person name="Meyer F."/>
            <person name="Nechitaylo T."/>
            <person name="Puehler A."/>
            <person name="Regenhardt D."/>
            <person name="Rupp O."/>
            <person name="Sabirova J.S."/>
            <person name="Selbitschka W."/>
            <person name="Yakimov M.M."/>
            <person name="Timmis K.N."/>
            <person name="Vorhoelter F.-J."/>
            <person name="Weidner S."/>
            <person name="Kaiser O."/>
            <person name="Golyshin P.N."/>
        </authorList>
    </citation>
    <scope>NUCLEOTIDE SEQUENCE [LARGE SCALE GENOMIC DNA]</scope>
    <source>
        <strain>ATCC 700651 / DSM 11573 / NCIMB 13689 / SK2</strain>
    </source>
</reference>
<dbReference type="EMBL" id="AM286690">
    <property type="protein sequence ID" value="CAL15965.1"/>
    <property type="molecule type" value="Genomic_DNA"/>
</dbReference>
<dbReference type="RefSeq" id="WP_011587803.1">
    <property type="nucleotide sequence ID" value="NC_008260.1"/>
</dbReference>
<dbReference type="SMR" id="Q0VS83"/>
<dbReference type="STRING" id="393595.ABO_0517"/>
<dbReference type="KEGG" id="abo:ABO_0517"/>
<dbReference type="eggNOG" id="COG1825">
    <property type="taxonomic scope" value="Bacteria"/>
</dbReference>
<dbReference type="HOGENOM" id="CLU_075939_0_1_6"/>
<dbReference type="OrthoDB" id="9806411at2"/>
<dbReference type="Proteomes" id="UP000008871">
    <property type="component" value="Chromosome"/>
</dbReference>
<dbReference type="GO" id="GO:0022625">
    <property type="term" value="C:cytosolic large ribosomal subunit"/>
    <property type="evidence" value="ECO:0007669"/>
    <property type="project" value="TreeGrafter"/>
</dbReference>
<dbReference type="GO" id="GO:0008097">
    <property type="term" value="F:5S rRNA binding"/>
    <property type="evidence" value="ECO:0007669"/>
    <property type="project" value="InterPro"/>
</dbReference>
<dbReference type="GO" id="GO:0003735">
    <property type="term" value="F:structural constituent of ribosome"/>
    <property type="evidence" value="ECO:0007669"/>
    <property type="project" value="InterPro"/>
</dbReference>
<dbReference type="GO" id="GO:0006412">
    <property type="term" value="P:translation"/>
    <property type="evidence" value="ECO:0007669"/>
    <property type="project" value="UniProtKB-UniRule"/>
</dbReference>
<dbReference type="CDD" id="cd00495">
    <property type="entry name" value="Ribosomal_L25_TL5_CTC"/>
    <property type="match status" value="1"/>
</dbReference>
<dbReference type="Gene3D" id="2.170.120.20">
    <property type="entry name" value="Ribosomal protein L25, beta domain"/>
    <property type="match status" value="1"/>
</dbReference>
<dbReference type="Gene3D" id="2.40.240.10">
    <property type="entry name" value="Ribosomal Protein L25, Chain P"/>
    <property type="match status" value="1"/>
</dbReference>
<dbReference type="HAMAP" id="MF_01334">
    <property type="entry name" value="Ribosomal_bL25_CTC"/>
    <property type="match status" value="1"/>
</dbReference>
<dbReference type="InterPro" id="IPR020056">
    <property type="entry name" value="Rbsml_bL25/Gln-tRNA_synth_N"/>
</dbReference>
<dbReference type="InterPro" id="IPR011035">
    <property type="entry name" value="Ribosomal_bL25/Gln-tRNA_synth"/>
</dbReference>
<dbReference type="InterPro" id="IPR020057">
    <property type="entry name" value="Ribosomal_bL25_b-dom"/>
</dbReference>
<dbReference type="InterPro" id="IPR037121">
    <property type="entry name" value="Ribosomal_bL25_C"/>
</dbReference>
<dbReference type="InterPro" id="IPR001021">
    <property type="entry name" value="Ribosomal_bL25_long"/>
</dbReference>
<dbReference type="InterPro" id="IPR029751">
    <property type="entry name" value="Ribosomal_L25_dom"/>
</dbReference>
<dbReference type="InterPro" id="IPR020930">
    <property type="entry name" value="Ribosomal_uL5_bac-type"/>
</dbReference>
<dbReference type="NCBIfam" id="TIGR00731">
    <property type="entry name" value="bL25_bact_ctc"/>
    <property type="match status" value="1"/>
</dbReference>
<dbReference type="NCBIfam" id="NF004128">
    <property type="entry name" value="PRK05618.1-2"/>
    <property type="match status" value="1"/>
</dbReference>
<dbReference type="NCBIfam" id="NF004130">
    <property type="entry name" value="PRK05618.1-5"/>
    <property type="match status" value="1"/>
</dbReference>
<dbReference type="NCBIfam" id="NF004612">
    <property type="entry name" value="PRK05943.1"/>
    <property type="match status" value="1"/>
</dbReference>
<dbReference type="PANTHER" id="PTHR33284">
    <property type="entry name" value="RIBOSOMAL PROTEIN L25/GLN-TRNA SYNTHETASE, ANTI-CODON-BINDING DOMAIN-CONTAINING PROTEIN"/>
    <property type="match status" value="1"/>
</dbReference>
<dbReference type="PANTHER" id="PTHR33284:SF1">
    <property type="entry name" value="RIBOSOMAL PROTEIN L25_GLN-TRNA SYNTHETASE, ANTI-CODON-BINDING DOMAIN-CONTAINING PROTEIN"/>
    <property type="match status" value="1"/>
</dbReference>
<dbReference type="Pfam" id="PF01386">
    <property type="entry name" value="Ribosomal_L25p"/>
    <property type="match status" value="1"/>
</dbReference>
<dbReference type="Pfam" id="PF14693">
    <property type="entry name" value="Ribosomal_TL5_C"/>
    <property type="match status" value="1"/>
</dbReference>
<dbReference type="SUPFAM" id="SSF50715">
    <property type="entry name" value="Ribosomal protein L25-like"/>
    <property type="match status" value="1"/>
</dbReference>
<protein>
    <recommendedName>
        <fullName evidence="1">Large ribosomal subunit protein bL25</fullName>
    </recommendedName>
    <alternativeName>
        <fullName evidence="3">50S ribosomal protein L25</fullName>
    </alternativeName>
    <alternativeName>
        <fullName evidence="1">General stress protein CTC</fullName>
    </alternativeName>
</protein>
<gene>
    <name evidence="1" type="primary">rplY</name>
    <name evidence="1" type="synonym">ctc</name>
    <name type="ordered locus">ABO_0517</name>
</gene>
<feature type="chain" id="PRO_1000052863" description="Large ribosomal subunit protein bL25">
    <location>
        <begin position="1"/>
        <end position="214"/>
    </location>
</feature>
<feature type="region of interest" description="Disordered" evidence="2">
    <location>
        <begin position="1"/>
        <end position="23"/>
    </location>
</feature>
<feature type="region of interest" description="Disordered" evidence="2">
    <location>
        <begin position="182"/>
        <end position="214"/>
    </location>
</feature>
<feature type="compositionally biased region" description="Acidic residues" evidence="2">
    <location>
        <begin position="200"/>
        <end position="214"/>
    </location>
</feature>
<accession>Q0VS83</accession>
<organism>
    <name type="scientific">Alcanivorax borkumensis (strain ATCC 700651 / DSM 11573 / NCIMB 13689 / SK2)</name>
    <dbReference type="NCBI Taxonomy" id="393595"/>
    <lineage>
        <taxon>Bacteria</taxon>
        <taxon>Pseudomonadati</taxon>
        <taxon>Pseudomonadota</taxon>
        <taxon>Gammaproteobacteria</taxon>
        <taxon>Oceanospirillales</taxon>
        <taxon>Alcanivoracaceae</taxon>
        <taxon>Alcanivorax</taxon>
    </lineage>
</organism>
<proteinExistence type="inferred from homology"/>
<name>RL25_ALCBS</name>
<keyword id="KW-1185">Reference proteome</keyword>
<keyword id="KW-0687">Ribonucleoprotein</keyword>
<keyword id="KW-0689">Ribosomal protein</keyword>
<keyword id="KW-0694">RNA-binding</keyword>
<keyword id="KW-0699">rRNA-binding</keyword>